<protein>
    <recommendedName>
        <fullName evidence="1">Maturase K</fullName>
    </recommendedName>
    <alternativeName>
        <fullName evidence="1">Intron maturase</fullName>
    </alternativeName>
</protein>
<gene>
    <name evidence="1" type="primary">matK</name>
</gene>
<reference key="1">
    <citation type="journal article" date="2007" name="BMC Biol.">
        <title>Systematics and plastid genome evolution of the cryptically photosynthetic parasitic plant genus Cuscuta (Convolvulaceae).</title>
        <authorList>
            <person name="McNeal J.R."/>
            <person name="Arumugunathan K."/>
            <person name="Kuehl J.V."/>
            <person name="Boore J.L."/>
            <person name="dePamphilis C.W."/>
        </authorList>
    </citation>
    <scope>NUCLEOTIDE SEQUENCE [GENOMIC DNA]</scope>
</reference>
<reference key="2">
    <citation type="journal article" date="2007" name="BMC Plant Biol.">
        <title>Complete DNA sequences of the plastid genomes of two parasitic flowering plant species, Cuscuta reflexa and Cuscuta gronovii.</title>
        <authorList>
            <person name="Funk H.T."/>
            <person name="Berg S."/>
            <person name="Krupinska K."/>
            <person name="Maier U.-G."/>
            <person name="Krause K."/>
        </authorList>
    </citation>
    <scope>NUCLEOTIDE SEQUENCE [LARGE SCALE GENOMIC DNA]</scope>
</reference>
<comment type="function">
    <text evidence="1">Usually encoded in the trnK tRNA gene intron. Probably assists in splicing its own and other chloroplast group II introns.</text>
</comment>
<comment type="subcellular location">
    <subcellularLocation>
        <location>Plastid</location>
    </subcellularLocation>
</comment>
<comment type="similarity">
    <text evidence="1">Belongs to the intron maturase 2 family. MatK subfamily.</text>
</comment>
<comment type="caution">
    <text evidence="2">Young tissue from this organism is photosynthetic and contains some thylakoids, although the photosynthetic activity does not exceed the light compensation point.</text>
</comment>
<sequence length="509" mass="60828">MSLVQIQLKTEDFKIYLQLPVRSQQHNFIYPLLFQEYIYVLVHDRDLKRSIFFANIGYEKKFRFQIVKRLINRMYKQIHLTTYYSNYSNKRTIYGLLKSFYYKLLSSGFSFLFEIPFFFKFISERKKILKSQNLRSIHSIFTFFEDNLSHLKYVLDLLIPNPPHPEILVQKIRYWVQDASSLHLLRFFLHEFCSVKSLITTNKSKRNERFLFLLYNSYICEYESIFLVLRNQSLHLGSMSFVTLFERNIFYGKIECFAELFAQDSQANLRLFKDTDPSMHYARYRGKSILASNGGLLLMPKWKYYIVNFWQCYFYLWFHTERINISQIDSHPFYLMDYISSIAQIPSMVRSKMLENLFLINNDMKIFETFVPIIPIIGSLAKAKFCNLLGNPISKPVWADFSDSDIIERFGRICRNIFHYYSGSSKKRSLYQIKYILRLSCARTLARKHKSTLRGFLQSLGLKLLEEFFTSEEQIIFLTFPNASLNLRGVSKGRIWYFDIVYINEQANF</sequence>
<proteinExistence type="inferred from homology"/>
<accession>A7M948</accession>
<keyword id="KW-0507">mRNA processing</keyword>
<keyword id="KW-0934">Plastid</keyword>
<keyword id="KW-0694">RNA-binding</keyword>
<keyword id="KW-0819">tRNA processing</keyword>
<feature type="chain" id="PRO_0000355928" description="Maturase K">
    <location>
        <begin position="1"/>
        <end position="509"/>
    </location>
</feature>
<geneLocation type="plastid"/>
<evidence type="ECO:0000255" key="1">
    <source>
        <dbReference type="HAMAP-Rule" id="MF_01390"/>
    </source>
</evidence>
<evidence type="ECO:0000305" key="2"/>
<organism>
    <name type="scientific">Cuscuta reflexa</name>
    <name type="common">Southern Asian dodder</name>
    <dbReference type="NCBI Taxonomy" id="4129"/>
    <lineage>
        <taxon>Eukaryota</taxon>
        <taxon>Viridiplantae</taxon>
        <taxon>Streptophyta</taxon>
        <taxon>Embryophyta</taxon>
        <taxon>Tracheophyta</taxon>
        <taxon>Spermatophyta</taxon>
        <taxon>Magnoliopsida</taxon>
        <taxon>eudicotyledons</taxon>
        <taxon>Gunneridae</taxon>
        <taxon>Pentapetalae</taxon>
        <taxon>asterids</taxon>
        <taxon>lamiids</taxon>
        <taxon>Solanales</taxon>
        <taxon>Convolvulaceae</taxon>
        <taxon>Cuscuteae</taxon>
        <taxon>Cuscuta</taxon>
        <taxon>Cuscuta subgen. Monogynella</taxon>
    </lineage>
</organism>
<dbReference type="EMBL" id="AM711640">
    <property type="protein sequence ID" value="CAM98376.1"/>
    <property type="molecule type" value="Genomic_DNA"/>
</dbReference>
<dbReference type="EMBL" id="EU330285">
    <property type="protein sequence ID" value="ABY74024.1"/>
    <property type="molecule type" value="Genomic_DNA"/>
</dbReference>
<dbReference type="RefSeq" id="YP_001430090.1">
    <property type="nucleotide sequence ID" value="NC_009766.1"/>
</dbReference>
<dbReference type="GeneID" id="5536674"/>
<dbReference type="GO" id="GO:0009507">
    <property type="term" value="C:chloroplast"/>
    <property type="evidence" value="ECO:0007669"/>
    <property type="project" value="UniProtKB-UniRule"/>
</dbReference>
<dbReference type="GO" id="GO:0003723">
    <property type="term" value="F:RNA binding"/>
    <property type="evidence" value="ECO:0007669"/>
    <property type="project" value="UniProtKB-KW"/>
</dbReference>
<dbReference type="GO" id="GO:0006397">
    <property type="term" value="P:mRNA processing"/>
    <property type="evidence" value="ECO:0007669"/>
    <property type="project" value="UniProtKB-KW"/>
</dbReference>
<dbReference type="GO" id="GO:0008380">
    <property type="term" value="P:RNA splicing"/>
    <property type="evidence" value="ECO:0007669"/>
    <property type="project" value="UniProtKB-UniRule"/>
</dbReference>
<dbReference type="GO" id="GO:0008033">
    <property type="term" value="P:tRNA processing"/>
    <property type="evidence" value="ECO:0007669"/>
    <property type="project" value="UniProtKB-KW"/>
</dbReference>
<dbReference type="HAMAP" id="MF_01390">
    <property type="entry name" value="MatK"/>
    <property type="match status" value="1"/>
</dbReference>
<dbReference type="InterPro" id="IPR024937">
    <property type="entry name" value="Domain_X"/>
</dbReference>
<dbReference type="InterPro" id="IPR002866">
    <property type="entry name" value="Maturase_MatK"/>
</dbReference>
<dbReference type="InterPro" id="IPR024942">
    <property type="entry name" value="Maturase_MatK_N"/>
</dbReference>
<dbReference type="PANTHER" id="PTHR34811">
    <property type="entry name" value="MATURASE K"/>
    <property type="match status" value="1"/>
</dbReference>
<dbReference type="PANTHER" id="PTHR34811:SF1">
    <property type="entry name" value="MATURASE K"/>
    <property type="match status" value="1"/>
</dbReference>
<dbReference type="Pfam" id="PF01348">
    <property type="entry name" value="Intron_maturas2"/>
    <property type="match status" value="1"/>
</dbReference>
<dbReference type="Pfam" id="PF01824">
    <property type="entry name" value="MatK_N"/>
    <property type="match status" value="1"/>
</dbReference>
<name>MATK_CUSRE</name>